<protein>
    <recommendedName>
        <fullName evidence="1">Ribosomal RNA small subunit methyltransferase G</fullName>
        <ecNumber evidence="1">2.1.1.170</ecNumber>
    </recommendedName>
    <alternativeName>
        <fullName evidence="1">16S rRNA 7-methylguanosine methyltransferase</fullName>
        <shortName evidence="1">16S rRNA m7G methyltransferase</shortName>
    </alternativeName>
</protein>
<name>RSMG_NEIG2</name>
<comment type="function">
    <text evidence="1">Specifically methylates the N7 position of guanine in position 527 of 16S rRNA.</text>
</comment>
<comment type="catalytic activity">
    <reaction evidence="1">
        <text>guanosine(527) in 16S rRNA + S-adenosyl-L-methionine = N(7)-methylguanosine(527) in 16S rRNA + S-adenosyl-L-homocysteine</text>
        <dbReference type="Rhea" id="RHEA:42732"/>
        <dbReference type="Rhea" id="RHEA-COMP:10209"/>
        <dbReference type="Rhea" id="RHEA-COMP:10210"/>
        <dbReference type="ChEBI" id="CHEBI:57856"/>
        <dbReference type="ChEBI" id="CHEBI:59789"/>
        <dbReference type="ChEBI" id="CHEBI:74269"/>
        <dbReference type="ChEBI" id="CHEBI:74480"/>
        <dbReference type="EC" id="2.1.1.170"/>
    </reaction>
</comment>
<comment type="subcellular location">
    <subcellularLocation>
        <location evidence="1">Cytoplasm</location>
    </subcellularLocation>
</comment>
<comment type="similarity">
    <text evidence="1">Belongs to the methyltransferase superfamily. RNA methyltransferase RsmG family.</text>
</comment>
<proteinExistence type="inferred from homology"/>
<gene>
    <name evidence="1" type="primary">rsmG</name>
    <name type="ordered locus">NGK_2483</name>
</gene>
<sequence>MERKERLRAGIAAMGPDISETAQDRLLAYVDLLKKWNKTYNLTALRDEEKMIVHHLLDSLTLLPYIEGAQTMLDVGSGGGQPGIPAAVCRPDVQITLLDANTKKTAFLRQAAIELGLDNVRVVSGRVEAVSDVRADVVTSRAFAELADFVSWTAHLLKDGGYWAAMKGVYPQGEIGRLPQDVCVEKVQRLDVPGLDAERHIVILSKR</sequence>
<reference key="1">
    <citation type="journal article" date="2008" name="J. Bacteriol.">
        <title>Complete genome sequence of Neisseria gonorrhoeae NCCP11945.</title>
        <authorList>
            <person name="Chung G.T."/>
            <person name="Yoo J.S."/>
            <person name="Oh H.B."/>
            <person name="Lee Y.S."/>
            <person name="Cha S.H."/>
            <person name="Kim S.J."/>
            <person name="Yoo C.K."/>
        </authorList>
    </citation>
    <scope>NUCLEOTIDE SEQUENCE [LARGE SCALE GENOMIC DNA]</scope>
    <source>
        <strain>NCCP11945</strain>
    </source>
</reference>
<organism>
    <name type="scientific">Neisseria gonorrhoeae (strain NCCP11945)</name>
    <dbReference type="NCBI Taxonomy" id="521006"/>
    <lineage>
        <taxon>Bacteria</taxon>
        <taxon>Pseudomonadati</taxon>
        <taxon>Pseudomonadota</taxon>
        <taxon>Betaproteobacteria</taxon>
        <taxon>Neisseriales</taxon>
        <taxon>Neisseriaceae</taxon>
        <taxon>Neisseria</taxon>
    </lineage>
</organism>
<keyword id="KW-0963">Cytoplasm</keyword>
<keyword id="KW-0489">Methyltransferase</keyword>
<keyword id="KW-0698">rRNA processing</keyword>
<keyword id="KW-0949">S-adenosyl-L-methionine</keyword>
<keyword id="KW-0808">Transferase</keyword>
<evidence type="ECO:0000255" key="1">
    <source>
        <dbReference type="HAMAP-Rule" id="MF_00074"/>
    </source>
</evidence>
<dbReference type="EC" id="2.1.1.170" evidence="1"/>
<dbReference type="EMBL" id="CP001050">
    <property type="protein sequence ID" value="ACF31083.1"/>
    <property type="molecule type" value="Genomic_DNA"/>
</dbReference>
<dbReference type="RefSeq" id="WP_003690016.1">
    <property type="nucleotide sequence ID" value="NC_011035.1"/>
</dbReference>
<dbReference type="SMR" id="B4RR25"/>
<dbReference type="GeneID" id="66754350"/>
<dbReference type="KEGG" id="ngk:NGK_2483"/>
<dbReference type="HOGENOM" id="CLU_065341_2_0_4"/>
<dbReference type="Proteomes" id="UP000002564">
    <property type="component" value="Chromosome"/>
</dbReference>
<dbReference type="GO" id="GO:0005829">
    <property type="term" value="C:cytosol"/>
    <property type="evidence" value="ECO:0007669"/>
    <property type="project" value="TreeGrafter"/>
</dbReference>
<dbReference type="GO" id="GO:0070043">
    <property type="term" value="F:rRNA (guanine-N7-)-methyltransferase activity"/>
    <property type="evidence" value="ECO:0007669"/>
    <property type="project" value="UniProtKB-UniRule"/>
</dbReference>
<dbReference type="CDD" id="cd02440">
    <property type="entry name" value="AdoMet_MTases"/>
    <property type="match status" value="1"/>
</dbReference>
<dbReference type="FunFam" id="3.40.50.150:FF:000353">
    <property type="entry name" value="Ribosomal RNA small subunit methyltransferase G"/>
    <property type="match status" value="1"/>
</dbReference>
<dbReference type="Gene3D" id="3.40.50.150">
    <property type="entry name" value="Vaccinia Virus protein VP39"/>
    <property type="match status" value="1"/>
</dbReference>
<dbReference type="HAMAP" id="MF_00074">
    <property type="entry name" value="16SrRNA_methyltr_G"/>
    <property type="match status" value="1"/>
</dbReference>
<dbReference type="InterPro" id="IPR003682">
    <property type="entry name" value="rRNA_ssu_MeTfrase_G"/>
</dbReference>
<dbReference type="InterPro" id="IPR029063">
    <property type="entry name" value="SAM-dependent_MTases_sf"/>
</dbReference>
<dbReference type="NCBIfam" id="TIGR00138">
    <property type="entry name" value="rsmG_gidB"/>
    <property type="match status" value="1"/>
</dbReference>
<dbReference type="PANTHER" id="PTHR31760">
    <property type="entry name" value="S-ADENOSYL-L-METHIONINE-DEPENDENT METHYLTRANSFERASES SUPERFAMILY PROTEIN"/>
    <property type="match status" value="1"/>
</dbReference>
<dbReference type="PANTHER" id="PTHR31760:SF0">
    <property type="entry name" value="S-ADENOSYL-L-METHIONINE-DEPENDENT METHYLTRANSFERASES SUPERFAMILY PROTEIN"/>
    <property type="match status" value="1"/>
</dbReference>
<dbReference type="Pfam" id="PF02527">
    <property type="entry name" value="GidB"/>
    <property type="match status" value="1"/>
</dbReference>
<dbReference type="PIRSF" id="PIRSF003078">
    <property type="entry name" value="GidB"/>
    <property type="match status" value="1"/>
</dbReference>
<dbReference type="SUPFAM" id="SSF53335">
    <property type="entry name" value="S-adenosyl-L-methionine-dependent methyltransferases"/>
    <property type="match status" value="1"/>
</dbReference>
<accession>B4RR25</accession>
<feature type="chain" id="PRO_1000092640" description="Ribosomal RNA small subunit methyltransferase G">
    <location>
        <begin position="1"/>
        <end position="207"/>
    </location>
</feature>
<feature type="binding site" evidence="1">
    <location>
        <position position="76"/>
    </location>
    <ligand>
        <name>S-adenosyl-L-methionine</name>
        <dbReference type="ChEBI" id="CHEBI:59789"/>
    </ligand>
</feature>
<feature type="binding site" evidence="1">
    <location>
        <position position="81"/>
    </location>
    <ligand>
        <name>S-adenosyl-L-methionine</name>
        <dbReference type="ChEBI" id="CHEBI:59789"/>
    </ligand>
</feature>
<feature type="binding site" evidence="1">
    <location>
        <begin position="127"/>
        <end position="128"/>
    </location>
    <ligand>
        <name>S-adenosyl-L-methionine</name>
        <dbReference type="ChEBI" id="CHEBI:59789"/>
    </ligand>
</feature>
<feature type="binding site" evidence="1">
    <location>
        <position position="141"/>
    </location>
    <ligand>
        <name>S-adenosyl-L-methionine</name>
        <dbReference type="ChEBI" id="CHEBI:59789"/>
    </ligand>
</feature>